<accession>B5YT58</accession>
<protein>
    <recommendedName>
        <fullName evidence="1">Chromosome partition protein MukB</fullName>
    </recommendedName>
    <alternativeName>
        <fullName evidence="1">Structural maintenance of chromosome-related protein</fullName>
    </alternativeName>
</protein>
<keyword id="KW-0067">ATP-binding</keyword>
<keyword id="KW-0131">Cell cycle</keyword>
<keyword id="KW-0132">Cell division</keyword>
<keyword id="KW-0159">Chromosome partition</keyword>
<keyword id="KW-0175">Coiled coil</keyword>
<keyword id="KW-0963">Cytoplasm</keyword>
<keyword id="KW-0226">DNA condensation</keyword>
<keyword id="KW-0238">DNA-binding</keyword>
<keyword id="KW-0547">Nucleotide-binding</keyword>
<name>MUKB_ECO5E</name>
<reference key="1">
    <citation type="journal article" date="2011" name="Proc. Natl. Acad. Sci. U.S.A.">
        <title>Genomic anatomy of Escherichia coli O157:H7 outbreaks.</title>
        <authorList>
            <person name="Eppinger M."/>
            <person name="Mammel M.K."/>
            <person name="Leclerc J.E."/>
            <person name="Ravel J."/>
            <person name="Cebula T.A."/>
        </authorList>
    </citation>
    <scope>NUCLEOTIDE SEQUENCE [LARGE SCALE GENOMIC DNA]</scope>
    <source>
        <strain>EC4115 / EHEC</strain>
    </source>
</reference>
<comment type="function">
    <text evidence="1">Plays a central role in chromosome condensation, segregation and cell cycle progression. Functions as a homodimer, which is essential for chromosome partition. Involved in negative DNA supercoiling in vivo, and by this means organize and compact chromosomes. May achieve or facilitate chromosome segregation by condensation DNA from both sides of a centrally located replisome during cell division.</text>
</comment>
<comment type="subunit">
    <text evidence="1">Homodimerization via its hinge domain. Binds to DNA via its C-terminal region. Interacts, and probably forms a ternary complex, with MukE and MukF via its C-terminal region. The complex formation is stimulated by calcium or magnesium. Interacts with tubulin-related protein FtsZ.</text>
</comment>
<comment type="subcellular location">
    <subcellularLocation>
        <location evidence="1">Cytoplasm</location>
        <location evidence="1">Nucleoid</location>
    </subcellularLocation>
    <text evidence="1">Restricted to the nucleoid region.</text>
</comment>
<comment type="domain">
    <text evidence="1">The hinge domain, which separates the large intramolecular coiled coil regions, allows the homodimerization, forming a V-shaped homodimer.</text>
</comment>
<comment type="similarity">
    <text evidence="1">Belongs to the SMC family. MukB subfamily.</text>
</comment>
<organism>
    <name type="scientific">Escherichia coli O157:H7 (strain EC4115 / EHEC)</name>
    <dbReference type="NCBI Taxonomy" id="444450"/>
    <lineage>
        <taxon>Bacteria</taxon>
        <taxon>Pseudomonadati</taxon>
        <taxon>Pseudomonadota</taxon>
        <taxon>Gammaproteobacteria</taxon>
        <taxon>Enterobacterales</taxon>
        <taxon>Enterobacteriaceae</taxon>
        <taxon>Escherichia</taxon>
    </lineage>
</organism>
<sequence>MIERGKFRSLTLINWNGFFARTFDLDELVTTLSGGNGAGKSTTMAAFVTALIPDLTLLHFRNTTEAGATSGSRDKGLHGKLKAGVCYSMLDTINSRHQRVVVGVRLQQVAGRDRKVDIKPFAIQGLPMSVQPTQLVTETLNERQARVLPLNELKDKLEAMEGVQFKQFNSITDYHSLMFDLGIIARRLRSASDRSKFYRLIEASLYGGISSAITRSLRDYLLPENSGVRKAFQDMEAALRENRMTLEAIRVTQSDRDLFKHLISEATNYVAADYMRHANERRVHLDKALEFRRELHTSRQQLAAEQYKHVDMARELAEHNGAEGDLEADYQAASDHLNLVQTALRQQEKIERYEADLDELQIRLEEQNEVVAEAIERQEENEARAEAAELEVDELKSQLADYQQALDVQQTRAIQYNQAIAALNRAKELCHLPDLTADSAAEWLETFQAKELEATEKMLSLEQKMSMAQTAHSQFEQAYQLVVAINGPLARNEAWDVARELLREGVDQRHLAEQVQPLRMRLSELEQRLREQQEAERLLADFCKRQGKNFDIDELEALHQELEARIASLSDSVSNAREERMALRQEQEQLQSRIQSLMQRAPVWLAAQNSLNQLSEQCGEEFTSSQDVTEYLQQLLEREREAIVERDEVGARKNAVDEEIERLSQPGGSEDQRLNALAERFGGVLLSEIYDDVSLEDAPYFSALYGPSRHAIVVPDLSQVTEHLEGLTDCPEDLYLIEGDPQSFDDSVFSVDELEKAVVVKIADRQWRYSRFPEVPLFGRAARESRIESLHAEREVLSERFATLSFDVQKTQRLHQAFSRFIGSHLAVAFESDPEAEIRQLNSRRVELERALSNHENDNQQQRIQFEQAKEGVTALNRILPRLNLLADDSLADRVDEIRERLDEAQEAARFVQQFGNQLAKLEPIVSVLQSDPEQFEQLKEDYAYSQQMQRDARQQAFALTEVVQRRAHFSYSDSAEMLSGNSDLNEKLRERLEQAEAERTRAREALRGHAAQLSQYNQVLASLKSSYDTKKELLNDLQRELQDIGVRADSGAEERARIRRDELHAQLSNNRSRRNQLEKALTFCEAEMDNLTRKLRKLERDYFEMREQVVTAKAGWCAVMRMVKDNGVERRLHRRELAYLSADDLRSMSDKALGALRLAVADNEHLRDVLRMSEDPKRPERKIQFFVAVYQHLRERIRQDIIRTDDPVEAIEQMEIELSRLTEELTSREQKLAISSRSVANIIRKTIQREQNRIRMLNQGLQNVSFGQVNSVRLNVNVRETHAMLLDVLSEQHEQHQDLFNSNRLTFSEALAKLYQRLNPQIDMGQRTPQTIGEELLDYRNYLEMEVEVNRGSDGWLRAESGALSTGEAIGTGMSILVMVVQSWEDESRRLRGKDISPCRLLFLDEAARLDARSIATLFELCERLQMQLIIAAPENISPEKGTTYKLVRKVFQNTEHVHVVGLRGFAPQLPETLPGSDEAPSQAS</sequence>
<gene>
    <name evidence="1" type="primary">mukB</name>
    <name type="ordered locus">ECH74115_1085</name>
</gene>
<evidence type="ECO:0000255" key="1">
    <source>
        <dbReference type="HAMAP-Rule" id="MF_01800"/>
    </source>
</evidence>
<feature type="chain" id="PRO_1000187469" description="Chromosome partition protein MukB">
    <location>
        <begin position="1"/>
        <end position="1486"/>
    </location>
</feature>
<feature type="region of interest" description="Flexible hinge" evidence="1">
    <location>
        <begin position="666"/>
        <end position="783"/>
    </location>
</feature>
<feature type="coiled-coil region" evidence="1">
    <location>
        <begin position="326"/>
        <end position="418"/>
    </location>
</feature>
<feature type="coiled-coil region" evidence="1">
    <location>
        <begin position="444"/>
        <end position="480"/>
    </location>
</feature>
<feature type="coiled-coil region" evidence="1">
    <location>
        <begin position="509"/>
        <end position="603"/>
    </location>
</feature>
<feature type="coiled-coil region" evidence="1">
    <location>
        <begin position="835"/>
        <end position="923"/>
    </location>
</feature>
<feature type="coiled-coil region" evidence="1">
    <location>
        <begin position="977"/>
        <end position="1115"/>
    </location>
</feature>
<feature type="coiled-coil region" evidence="1">
    <location>
        <begin position="1209"/>
        <end position="1266"/>
    </location>
</feature>
<feature type="binding site" evidence="1">
    <location>
        <begin position="34"/>
        <end position="41"/>
    </location>
    <ligand>
        <name>ATP</name>
        <dbReference type="ChEBI" id="CHEBI:30616"/>
    </ligand>
</feature>
<dbReference type="EMBL" id="CP001164">
    <property type="protein sequence ID" value="ACI36055.1"/>
    <property type="molecule type" value="Genomic_DNA"/>
</dbReference>
<dbReference type="RefSeq" id="WP_000572668.1">
    <property type="nucleotide sequence ID" value="NC_011353.1"/>
</dbReference>
<dbReference type="SMR" id="B5YT58"/>
<dbReference type="KEGG" id="ecf:ECH74115_1085"/>
<dbReference type="HOGENOM" id="CLU_004430_0_0_6"/>
<dbReference type="GO" id="GO:0005737">
    <property type="term" value="C:cytoplasm"/>
    <property type="evidence" value="ECO:0007669"/>
    <property type="project" value="UniProtKB-UniRule"/>
</dbReference>
<dbReference type="GO" id="GO:0009295">
    <property type="term" value="C:nucleoid"/>
    <property type="evidence" value="ECO:0007669"/>
    <property type="project" value="UniProtKB-SubCell"/>
</dbReference>
<dbReference type="GO" id="GO:0005524">
    <property type="term" value="F:ATP binding"/>
    <property type="evidence" value="ECO:0007669"/>
    <property type="project" value="UniProtKB-UniRule"/>
</dbReference>
<dbReference type="GO" id="GO:0003677">
    <property type="term" value="F:DNA binding"/>
    <property type="evidence" value="ECO:0007669"/>
    <property type="project" value="UniProtKB-UniRule"/>
</dbReference>
<dbReference type="GO" id="GO:0051301">
    <property type="term" value="P:cell division"/>
    <property type="evidence" value="ECO:0007669"/>
    <property type="project" value="UniProtKB-KW"/>
</dbReference>
<dbReference type="GO" id="GO:0030261">
    <property type="term" value="P:chromosome condensation"/>
    <property type="evidence" value="ECO:0007669"/>
    <property type="project" value="UniProtKB-KW"/>
</dbReference>
<dbReference type="GO" id="GO:0007059">
    <property type="term" value="P:chromosome segregation"/>
    <property type="evidence" value="ECO:0007669"/>
    <property type="project" value="UniProtKB-UniRule"/>
</dbReference>
<dbReference type="GO" id="GO:0006260">
    <property type="term" value="P:DNA replication"/>
    <property type="evidence" value="ECO:0007669"/>
    <property type="project" value="UniProtKB-UniRule"/>
</dbReference>
<dbReference type="FunFam" id="1.20.58.850:FF:000001">
    <property type="entry name" value="Chromosome partition protein MukB"/>
    <property type="match status" value="1"/>
</dbReference>
<dbReference type="FunFam" id="3.30.70.3500:FF:000001">
    <property type="entry name" value="Chromosome partition protein MukB"/>
    <property type="match status" value="1"/>
</dbReference>
<dbReference type="FunFam" id="3.40.1140.10:FF:000001">
    <property type="entry name" value="Chromosome partition protein MukB"/>
    <property type="match status" value="1"/>
</dbReference>
<dbReference type="FunFam" id="3.40.1140.10:FF:000002">
    <property type="entry name" value="Chromosome partition protein MukB"/>
    <property type="match status" value="1"/>
</dbReference>
<dbReference type="Gene3D" id="1.20.58.850">
    <property type="match status" value="1"/>
</dbReference>
<dbReference type="Gene3D" id="3.40.1140.10">
    <property type="match status" value="2"/>
</dbReference>
<dbReference type="Gene3D" id="1.20.5.420">
    <property type="entry name" value="Immunoglobulin FC, subunit C"/>
    <property type="match status" value="1"/>
</dbReference>
<dbReference type="Gene3D" id="3.30.70.3500">
    <property type="entry name" value="MukB, hinge domain"/>
    <property type="match status" value="1"/>
</dbReference>
<dbReference type="HAMAP" id="MF_01800">
    <property type="entry name" value="MukB"/>
    <property type="match status" value="1"/>
</dbReference>
<dbReference type="InterPro" id="IPR012090">
    <property type="entry name" value="MukB"/>
</dbReference>
<dbReference type="InterPro" id="IPR050308">
    <property type="entry name" value="MukB/SMC"/>
</dbReference>
<dbReference type="InterPro" id="IPR032520">
    <property type="entry name" value="MukB_hinge"/>
</dbReference>
<dbReference type="InterPro" id="IPR042501">
    <property type="entry name" value="MukB_hinge_sf"/>
</dbReference>
<dbReference type="InterPro" id="IPR007406">
    <property type="entry name" value="MukB_N_dom"/>
</dbReference>
<dbReference type="InterPro" id="IPR027417">
    <property type="entry name" value="P-loop_NTPase"/>
</dbReference>
<dbReference type="NCBIfam" id="NF003422">
    <property type="entry name" value="PRK04863.1"/>
    <property type="match status" value="1"/>
</dbReference>
<dbReference type="PANTHER" id="PTHR42963">
    <property type="entry name" value="CHROMOSOME PARTITION PROTEIN MUKB"/>
    <property type="match status" value="1"/>
</dbReference>
<dbReference type="PANTHER" id="PTHR42963:SF1">
    <property type="entry name" value="DUF4476 DOMAIN-CONTAINING PROTEIN"/>
    <property type="match status" value="1"/>
</dbReference>
<dbReference type="Pfam" id="PF04310">
    <property type="entry name" value="MukB"/>
    <property type="match status" value="1"/>
</dbReference>
<dbReference type="Pfam" id="PF16330">
    <property type="entry name" value="MukB_hinge"/>
    <property type="match status" value="1"/>
</dbReference>
<dbReference type="Pfam" id="PF13558">
    <property type="entry name" value="SbcC_Walker_B"/>
    <property type="match status" value="1"/>
</dbReference>
<dbReference type="PIRSF" id="PIRSF005246">
    <property type="entry name" value="MukB"/>
    <property type="match status" value="1"/>
</dbReference>
<dbReference type="SUPFAM" id="SSF52540">
    <property type="entry name" value="P-loop containing nucleoside triphosphate hydrolases"/>
    <property type="match status" value="2"/>
</dbReference>
<proteinExistence type="inferred from homology"/>